<gene>
    <name type="primary">IL1RN</name>
    <name type="synonym">IL1F3</name>
    <name type="synonym">IL1RA</name>
</gene>
<dbReference type="EMBL" id="X53296">
    <property type="protein sequence ID" value="CAA37386.1"/>
    <property type="molecule type" value="mRNA"/>
</dbReference>
<dbReference type="EMBL" id="X52015">
    <property type="protein sequence ID" value="CAA36262.1"/>
    <property type="molecule type" value="mRNA"/>
</dbReference>
<dbReference type="EMBL" id="M63099">
    <property type="protein sequence ID" value="AAB41943.1"/>
    <property type="molecule type" value="Genomic_DNA"/>
</dbReference>
<dbReference type="EMBL" id="X64532">
    <property type="protein sequence ID" value="CAA45832.1"/>
    <property type="molecule type" value="Genomic_DNA"/>
</dbReference>
<dbReference type="EMBL" id="U65590">
    <property type="protein sequence ID" value="AAB92270.1"/>
    <property type="molecule type" value="Genomic_DNA"/>
</dbReference>
<dbReference type="EMBL" id="U65590">
    <property type="protein sequence ID" value="AAB92268.1"/>
    <property type="molecule type" value="Genomic_DNA"/>
</dbReference>
<dbReference type="EMBL" id="U65590">
    <property type="protein sequence ID" value="AAB92269.1"/>
    <property type="molecule type" value="Genomic_DNA"/>
</dbReference>
<dbReference type="EMBL" id="M55646">
    <property type="protein sequence ID" value="AAA59138.1"/>
    <property type="molecule type" value="mRNA"/>
</dbReference>
<dbReference type="EMBL" id="X84348">
    <property type="protein sequence ID" value="CAA59087.1"/>
    <property type="molecule type" value="mRNA"/>
</dbReference>
<dbReference type="EMBL" id="AY196903">
    <property type="protein sequence ID" value="AAN87150.1"/>
    <property type="molecule type" value="Genomic_DNA"/>
</dbReference>
<dbReference type="EMBL" id="AK290898">
    <property type="protein sequence ID" value="BAF83587.1"/>
    <property type="molecule type" value="mRNA"/>
</dbReference>
<dbReference type="EMBL" id="AK290926">
    <property type="protein sequence ID" value="BAF83615.1"/>
    <property type="molecule type" value="mRNA"/>
</dbReference>
<dbReference type="EMBL" id="AC024704">
    <property type="protein sequence ID" value="AAX93278.1"/>
    <property type="molecule type" value="Genomic_DNA"/>
</dbReference>
<dbReference type="EMBL" id="CH471217">
    <property type="protein sequence ID" value="EAW73625.1"/>
    <property type="molecule type" value="Genomic_DNA"/>
</dbReference>
<dbReference type="EMBL" id="BC009745">
    <property type="protein sequence ID" value="AAH09745.1"/>
    <property type="molecule type" value="mRNA"/>
</dbReference>
<dbReference type="EMBL" id="AF043143">
    <property type="protein sequence ID" value="AAC39672.1"/>
    <property type="molecule type" value="mRNA"/>
</dbReference>
<dbReference type="EMBL" id="BN000002">
    <property type="protein sequence ID" value="CAD29879.1"/>
    <property type="molecule type" value="Genomic_DNA"/>
</dbReference>
<dbReference type="CCDS" id="CCDS2113.1">
    <molecule id="P18510-2"/>
</dbReference>
<dbReference type="CCDS" id="CCDS2114.1">
    <molecule id="P18510-3"/>
</dbReference>
<dbReference type="CCDS" id="CCDS2115.1">
    <molecule id="P18510-4"/>
</dbReference>
<dbReference type="CCDS" id="CCDS46396.1">
    <molecule id="P18510-1"/>
</dbReference>
<dbReference type="PIR" id="A40956">
    <property type="entry name" value="A30368"/>
</dbReference>
<dbReference type="PIR" id="I37893">
    <property type="entry name" value="A39386"/>
</dbReference>
<dbReference type="RefSeq" id="NP_000568.1">
    <molecule id="P18510-2"/>
    <property type="nucleotide sequence ID" value="NM_000577.5"/>
</dbReference>
<dbReference type="RefSeq" id="NP_001305843.1">
    <molecule id="P18510-4"/>
    <property type="nucleotide sequence ID" value="NM_001318914.2"/>
</dbReference>
<dbReference type="RefSeq" id="NP_001366289.1">
    <molecule id="P18510-4"/>
    <property type="nucleotide sequence ID" value="NM_001379360.1"/>
</dbReference>
<dbReference type="RefSeq" id="NP_776213.1">
    <molecule id="P18510-3"/>
    <property type="nucleotide sequence ID" value="NM_173841.3"/>
</dbReference>
<dbReference type="RefSeq" id="NP_776214.1">
    <molecule id="P18510-1"/>
    <property type="nucleotide sequence ID" value="NM_173842.3"/>
</dbReference>
<dbReference type="RefSeq" id="NP_776215.1">
    <molecule id="P18510-4"/>
    <property type="nucleotide sequence ID" value="NM_173843.3"/>
</dbReference>
<dbReference type="RefSeq" id="XP_005263718.1">
    <property type="nucleotide sequence ID" value="XM_005263661.4"/>
</dbReference>
<dbReference type="RefSeq" id="XP_011509423.1">
    <molecule id="P18510-4"/>
    <property type="nucleotide sequence ID" value="XM_011511121.2"/>
</dbReference>
<dbReference type="RefSeq" id="XP_047300140.1">
    <molecule id="P18510-4"/>
    <property type="nucleotide sequence ID" value="XM_047444184.1"/>
</dbReference>
<dbReference type="RefSeq" id="XP_047300141.1">
    <molecule id="P18510-4"/>
    <property type="nucleotide sequence ID" value="XM_047444185.1"/>
</dbReference>
<dbReference type="RefSeq" id="XP_047300142.1">
    <molecule id="P18510-4"/>
    <property type="nucleotide sequence ID" value="XM_047444186.1"/>
</dbReference>
<dbReference type="PDB" id="1ILR">
    <property type="method" value="X-ray"/>
    <property type="resolution" value="2.10 A"/>
    <property type="chains" value="1/2=26-177"/>
</dbReference>
<dbReference type="PDB" id="1ILT">
    <property type="method" value="X-ray"/>
    <property type="resolution" value="2.00 A"/>
    <property type="chains" value="A/B=26-177"/>
</dbReference>
<dbReference type="PDB" id="1IRA">
    <property type="method" value="X-ray"/>
    <property type="resolution" value="2.70 A"/>
    <property type="chains" value="X=26-177"/>
</dbReference>
<dbReference type="PDB" id="1IRP">
    <property type="method" value="NMR"/>
    <property type="chains" value="A=26-177"/>
</dbReference>
<dbReference type="PDB" id="2IRT">
    <property type="method" value="X-ray"/>
    <property type="resolution" value="3.20 A"/>
    <property type="chains" value="A/B=26-177"/>
</dbReference>
<dbReference type="PDBsum" id="1ILR"/>
<dbReference type="PDBsum" id="1ILT"/>
<dbReference type="PDBsum" id="1IRA"/>
<dbReference type="PDBsum" id="1IRP"/>
<dbReference type="PDBsum" id="2IRT"/>
<dbReference type="SMR" id="P18510"/>
<dbReference type="BioGRID" id="109772">
    <property type="interactions" value="58"/>
</dbReference>
<dbReference type="ComplexPortal" id="CPX-9126">
    <property type="entry name" value="Interleukin-1 antagonist complex"/>
</dbReference>
<dbReference type="FunCoup" id="P18510">
    <property type="interactions" value="553"/>
</dbReference>
<dbReference type="IntAct" id="P18510">
    <property type="interactions" value="36"/>
</dbReference>
<dbReference type="STRING" id="9606.ENSP00000259206"/>
<dbReference type="BindingDB" id="P18510"/>
<dbReference type="ChEMBL" id="CHEMBL4523191"/>
<dbReference type="DrugBank" id="DB06372">
    <property type="generic name" value="Rilonacept"/>
</dbReference>
<dbReference type="DrugCentral" id="P18510"/>
<dbReference type="Allergome" id="11858">
    <property type="allergen name" value="Hom s Anakinra"/>
</dbReference>
<dbReference type="GlyConnect" id="1947">
    <property type="glycosylation" value="2 N-Linked glycans (1 site)"/>
</dbReference>
<dbReference type="GlyCosmos" id="P18510">
    <property type="glycosylation" value="1 site, 2 glycans"/>
</dbReference>
<dbReference type="GlyGen" id="P18510">
    <property type="glycosylation" value="3 sites, 2 N-linked glycans (1 site)"/>
</dbReference>
<dbReference type="iPTMnet" id="P18510"/>
<dbReference type="PhosphoSitePlus" id="P18510"/>
<dbReference type="BioMuta" id="IL1RN"/>
<dbReference type="DMDM" id="124312"/>
<dbReference type="jPOST" id="P18510"/>
<dbReference type="MassIVE" id="P18510"/>
<dbReference type="PaxDb" id="9606-ENSP00000259206"/>
<dbReference type="PeptideAtlas" id="P18510"/>
<dbReference type="PRIDE" id="P18510"/>
<dbReference type="ProteomicsDB" id="53572">
    <molecule id="P18510-1"/>
</dbReference>
<dbReference type="ProteomicsDB" id="53573">
    <molecule id="P18510-2"/>
</dbReference>
<dbReference type="ProteomicsDB" id="53574">
    <molecule id="P18510-3"/>
</dbReference>
<dbReference type="ProteomicsDB" id="53575">
    <molecule id="P18510-4"/>
</dbReference>
<dbReference type="Antibodypedia" id="806">
    <property type="antibodies" value="926 antibodies from 42 providers"/>
</dbReference>
<dbReference type="CPTC" id="P18510">
    <property type="antibodies" value="1 antibody"/>
</dbReference>
<dbReference type="DNASU" id="3557"/>
<dbReference type="Ensembl" id="ENST00000259206.9">
    <molecule id="P18510-3"/>
    <property type="protein sequence ID" value="ENSP00000259206.5"/>
    <property type="gene ID" value="ENSG00000136689.20"/>
</dbReference>
<dbReference type="Ensembl" id="ENST00000354115.6">
    <molecule id="P18510-2"/>
    <property type="protein sequence ID" value="ENSP00000329072.3"/>
    <property type="gene ID" value="ENSG00000136689.20"/>
</dbReference>
<dbReference type="Ensembl" id="ENST00000361779.7">
    <molecule id="P18510-4"/>
    <property type="protein sequence ID" value="ENSP00000354816.3"/>
    <property type="gene ID" value="ENSG00000136689.20"/>
</dbReference>
<dbReference type="Ensembl" id="ENST00000409052.6">
    <molecule id="P18510-4"/>
    <property type="protein sequence ID" value="ENSP00000387210.1"/>
    <property type="gene ID" value="ENSG00000136689.20"/>
</dbReference>
<dbReference type="Ensembl" id="ENST00000409930.4">
    <molecule id="P18510-1"/>
    <property type="protein sequence ID" value="ENSP00000387173.3"/>
    <property type="gene ID" value="ENSG00000136689.20"/>
</dbReference>
<dbReference type="Ensembl" id="ENST00000696879.1">
    <molecule id="P18510-4"/>
    <property type="protein sequence ID" value="ENSP00000512947.1"/>
    <property type="gene ID" value="ENSG00000136689.20"/>
</dbReference>
<dbReference type="Ensembl" id="ENST00000696880.1">
    <molecule id="P18510-4"/>
    <property type="protein sequence ID" value="ENSP00000512948.1"/>
    <property type="gene ID" value="ENSG00000136689.20"/>
</dbReference>
<dbReference type="Ensembl" id="ENST00000696881.1">
    <molecule id="P18510-4"/>
    <property type="protein sequence ID" value="ENSP00000512949.1"/>
    <property type="gene ID" value="ENSG00000136689.20"/>
</dbReference>
<dbReference type="GeneID" id="3557"/>
<dbReference type="KEGG" id="hsa:3557"/>
<dbReference type="MANE-Select" id="ENST00000409930.4">
    <property type="protein sequence ID" value="ENSP00000387173.3"/>
    <property type="RefSeq nucleotide sequence ID" value="NM_173842.3"/>
    <property type="RefSeq protein sequence ID" value="NP_776214.1"/>
</dbReference>
<dbReference type="UCSC" id="uc002tiy.3">
    <molecule id="P18510-1"/>
    <property type="organism name" value="human"/>
</dbReference>
<dbReference type="AGR" id="HGNC:6000"/>
<dbReference type="CTD" id="3557"/>
<dbReference type="DisGeNET" id="3557"/>
<dbReference type="GeneCards" id="IL1RN"/>
<dbReference type="HGNC" id="HGNC:6000">
    <property type="gene designation" value="IL1RN"/>
</dbReference>
<dbReference type="HPA" id="ENSG00000136689">
    <property type="expression patterns" value="Tissue enriched (esophagus)"/>
</dbReference>
<dbReference type="MalaCards" id="IL1RN"/>
<dbReference type="MIM" id="147679">
    <property type="type" value="gene"/>
</dbReference>
<dbReference type="MIM" id="612628">
    <property type="type" value="phenotype"/>
</dbReference>
<dbReference type="MIM" id="612852">
    <property type="type" value="phenotype"/>
</dbReference>
<dbReference type="neXtProt" id="NX_P18510"/>
<dbReference type="OpenTargets" id="ENSG00000136689"/>
<dbReference type="Orphanet" id="210115">
    <property type="disease" value="Sterile multifocal osteomyelitis with periostitis and pustulosis"/>
</dbReference>
<dbReference type="PharmGKB" id="PA29816"/>
<dbReference type="VEuPathDB" id="HostDB:ENSG00000136689"/>
<dbReference type="eggNOG" id="ENOG502S5F0">
    <property type="taxonomic scope" value="Eukaryota"/>
</dbReference>
<dbReference type="GeneTree" id="ENSGT00950000182943"/>
<dbReference type="HOGENOM" id="CLU_095373_2_0_1"/>
<dbReference type="InParanoid" id="P18510"/>
<dbReference type="OMA" id="WYLCTAL"/>
<dbReference type="OrthoDB" id="9274793at2759"/>
<dbReference type="PAN-GO" id="P18510">
    <property type="GO annotations" value="4 GO annotations based on evolutionary models"/>
</dbReference>
<dbReference type="PhylomeDB" id="P18510"/>
<dbReference type="TreeFam" id="TF300203"/>
<dbReference type="PathwayCommons" id="P18510"/>
<dbReference type="Reactome" id="R-HSA-6783783">
    <property type="pathway name" value="Interleukin-10 signaling"/>
</dbReference>
<dbReference type="Reactome" id="R-HSA-9020702">
    <property type="pathway name" value="Interleukin-1 signaling"/>
</dbReference>
<dbReference type="SignaLink" id="P18510"/>
<dbReference type="SIGNOR" id="P18510"/>
<dbReference type="BioGRID-ORCS" id="3557">
    <property type="hits" value="9 hits in 1159 CRISPR screens"/>
</dbReference>
<dbReference type="ChiTaRS" id="IL1RN">
    <property type="organism name" value="human"/>
</dbReference>
<dbReference type="EvolutionaryTrace" id="P18510"/>
<dbReference type="GeneWiki" id="Interleukin_1_receptor_antagonist"/>
<dbReference type="GenomeRNAi" id="3557"/>
<dbReference type="Pharos" id="P18510">
    <property type="development level" value="Tchem"/>
</dbReference>
<dbReference type="PRO" id="PR:P18510"/>
<dbReference type="Proteomes" id="UP000005640">
    <property type="component" value="Chromosome 2"/>
</dbReference>
<dbReference type="RNAct" id="P18510">
    <property type="molecule type" value="protein"/>
</dbReference>
<dbReference type="Bgee" id="ENSG00000136689">
    <property type="expression patterns" value="Expressed in lower esophagus mucosa and 153 other cell types or tissues"/>
</dbReference>
<dbReference type="ExpressionAtlas" id="P18510">
    <property type="expression patterns" value="baseline and differential"/>
</dbReference>
<dbReference type="GO" id="GO:0005813">
    <property type="term" value="C:centrosome"/>
    <property type="evidence" value="ECO:0000314"/>
    <property type="project" value="HPA"/>
</dbReference>
<dbReference type="GO" id="GO:0005829">
    <property type="term" value="C:cytosol"/>
    <property type="evidence" value="ECO:0000314"/>
    <property type="project" value="HPA"/>
</dbReference>
<dbReference type="GO" id="GO:0070062">
    <property type="term" value="C:extracellular exosome"/>
    <property type="evidence" value="ECO:0007005"/>
    <property type="project" value="UniProtKB"/>
</dbReference>
<dbReference type="GO" id="GO:0005615">
    <property type="term" value="C:extracellular space"/>
    <property type="evidence" value="ECO:0000314"/>
    <property type="project" value="BHF-UCL"/>
</dbReference>
<dbReference type="GO" id="GO:0005654">
    <property type="term" value="C:nucleoplasm"/>
    <property type="evidence" value="ECO:0000314"/>
    <property type="project" value="HPA"/>
</dbReference>
<dbReference type="GO" id="GO:0005886">
    <property type="term" value="C:plasma membrane"/>
    <property type="evidence" value="ECO:0000304"/>
    <property type="project" value="Reactome"/>
</dbReference>
<dbReference type="GO" id="GO:0005125">
    <property type="term" value="F:cytokine activity"/>
    <property type="evidence" value="ECO:0007669"/>
    <property type="project" value="InterPro"/>
</dbReference>
<dbReference type="GO" id="GO:0005152">
    <property type="term" value="F:interleukin-1 receptor antagonist activity"/>
    <property type="evidence" value="ECO:0000314"/>
    <property type="project" value="BHF-UCL"/>
</dbReference>
<dbReference type="GO" id="GO:0005149">
    <property type="term" value="F:interleukin-1 receptor binding"/>
    <property type="evidence" value="ECO:0000314"/>
    <property type="project" value="BHF-UCL"/>
</dbReference>
<dbReference type="GO" id="GO:0045352">
    <property type="term" value="F:interleukin-1 type I receptor antagonist activity"/>
    <property type="evidence" value="ECO:0000314"/>
    <property type="project" value="BHF-UCL"/>
</dbReference>
<dbReference type="GO" id="GO:0045353">
    <property type="term" value="F:interleukin-1 type II receptor antagonist activity"/>
    <property type="evidence" value="ECO:0000314"/>
    <property type="project" value="BHF-UCL"/>
</dbReference>
<dbReference type="GO" id="GO:0005150">
    <property type="term" value="F:interleukin-1, type I receptor binding"/>
    <property type="evidence" value="ECO:0000353"/>
    <property type="project" value="BHF-UCL"/>
</dbReference>
<dbReference type="GO" id="GO:0005151">
    <property type="term" value="F:interleukin-1, type II receptor binding"/>
    <property type="evidence" value="ECO:0000353"/>
    <property type="project" value="BHF-UCL"/>
</dbReference>
<dbReference type="GO" id="GO:0006953">
    <property type="term" value="P:acute-phase response"/>
    <property type="evidence" value="ECO:0000314"/>
    <property type="project" value="BHF-UCL"/>
</dbReference>
<dbReference type="GO" id="GO:0006955">
    <property type="term" value="P:immune response"/>
    <property type="evidence" value="ECO:0000318"/>
    <property type="project" value="GO_Central"/>
</dbReference>
<dbReference type="GO" id="GO:0006954">
    <property type="term" value="P:inflammatory response"/>
    <property type="evidence" value="ECO:0000318"/>
    <property type="project" value="GO_Central"/>
</dbReference>
<dbReference type="GO" id="GO:0030073">
    <property type="term" value="P:insulin secretion"/>
    <property type="evidence" value="ECO:0007669"/>
    <property type="project" value="Ensembl"/>
</dbReference>
<dbReference type="GO" id="GO:0006629">
    <property type="term" value="P:lipid metabolic process"/>
    <property type="evidence" value="ECO:0007669"/>
    <property type="project" value="Ensembl"/>
</dbReference>
<dbReference type="GO" id="GO:0034115">
    <property type="term" value="P:negative regulation of heterotypic cell-cell adhesion"/>
    <property type="evidence" value="ECO:0000314"/>
    <property type="project" value="BHF-UCL"/>
</dbReference>
<dbReference type="GO" id="GO:2000660">
    <property type="term" value="P:negative regulation of interleukin-1-mediated signaling pathway"/>
    <property type="evidence" value="ECO:0000314"/>
    <property type="project" value="BHF-UCL"/>
</dbReference>
<dbReference type="GO" id="GO:0051384">
    <property type="term" value="P:response to glucocorticoid"/>
    <property type="evidence" value="ECO:0000314"/>
    <property type="project" value="BHF-UCL"/>
</dbReference>
<dbReference type="CDD" id="cd23297">
    <property type="entry name" value="beta-trefoil_IL1RA"/>
    <property type="match status" value="1"/>
</dbReference>
<dbReference type="FunFam" id="2.80.10.50:FF:000013">
    <property type="entry name" value="Interleukin-1"/>
    <property type="match status" value="1"/>
</dbReference>
<dbReference type="Gene3D" id="2.80.10.50">
    <property type="match status" value="1"/>
</dbReference>
<dbReference type="InterPro" id="IPR020877">
    <property type="entry name" value="IL-1_CS"/>
</dbReference>
<dbReference type="InterPro" id="IPR000975">
    <property type="entry name" value="IL-1_fam"/>
</dbReference>
<dbReference type="InterPro" id="IPR003297">
    <property type="entry name" value="IL-1RA/IL-36"/>
</dbReference>
<dbReference type="InterPro" id="IPR008996">
    <property type="entry name" value="IL1/FGF"/>
</dbReference>
<dbReference type="PANTHER" id="PTHR10078">
    <property type="entry name" value="INTERLEUKIN-1 FAMILY MEMBER"/>
    <property type="match status" value="1"/>
</dbReference>
<dbReference type="PANTHER" id="PTHR10078:SF28">
    <property type="entry name" value="INTERLEUKIN-1 RECEPTOR ANTAGONIST PROTEIN"/>
    <property type="match status" value="1"/>
</dbReference>
<dbReference type="Pfam" id="PF00340">
    <property type="entry name" value="IL1"/>
    <property type="match status" value="1"/>
</dbReference>
<dbReference type="PRINTS" id="PR00264">
    <property type="entry name" value="INTERLEUKIN1"/>
</dbReference>
<dbReference type="PRINTS" id="PR01360">
    <property type="entry name" value="INTRLEUKIN1X"/>
</dbReference>
<dbReference type="SMART" id="SM00125">
    <property type="entry name" value="IL1"/>
    <property type="match status" value="1"/>
</dbReference>
<dbReference type="SUPFAM" id="SSF50353">
    <property type="entry name" value="Cytokine"/>
    <property type="match status" value="1"/>
</dbReference>
<dbReference type="PROSITE" id="PS00253">
    <property type="entry name" value="INTERLEUKIN_1"/>
    <property type="match status" value="1"/>
</dbReference>
<protein>
    <recommendedName>
        <fullName>Interleukin-1 receptor antagonist protein</fullName>
        <shortName>IL-1RN</shortName>
        <shortName>IL-1ra</shortName>
        <shortName>IRAP</shortName>
    </recommendedName>
    <alternativeName>
        <fullName>ICIL-1RA</fullName>
    </alternativeName>
    <alternativeName>
        <fullName>IL1 inhibitor</fullName>
    </alternativeName>
    <innName>Anakinra</innName>
</protein>
<comment type="function">
    <text evidence="1 8">Anti-inflammatory antagonist of interleukin-1 family of proinflammatory cytokines such as interleukin-1beta/IL1B and interleukin-1alpha/IL1A. Protects from immune dysregulation and uncontrolled systemic inflammation triggered by IL1 for a range of innate stimulatory agents such as pathogens.</text>
</comment>
<comment type="interaction">
    <interactant intactId="EBI-1026330">
        <id>P18510</id>
    </interactant>
    <interactant intactId="EBI-525905">
        <id>P14778</id>
        <label>IL1R1</label>
    </interactant>
    <organismsDiffer>false</organismsDiffer>
    <experiments>2</experiments>
</comment>
<comment type="interaction">
    <interactant intactId="EBI-1026330">
        <id>P18510</id>
    </interactant>
    <interactant intactId="EBI-750109">
        <id>Q9NYB0</id>
        <label>TERF2IP</label>
    </interactant>
    <organismsDiffer>false</organismsDiffer>
    <experiments>2</experiments>
</comment>
<comment type="subcellular location">
    <molecule>Isoform 1</molecule>
    <subcellularLocation>
        <location evidence="7">Secreted</location>
    </subcellularLocation>
</comment>
<comment type="subcellular location">
    <molecule>Isoform 2</molecule>
    <subcellularLocation>
        <location>Cytoplasm</location>
    </subcellularLocation>
</comment>
<comment type="subcellular location">
    <molecule>Isoform 3</molecule>
    <subcellularLocation>
        <location>Cytoplasm</location>
    </subcellularLocation>
</comment>
<comment type="subcellular location">
    <molecule>Isoform 4</molecule>
    <subcellularLocation>
        <location>Cytoplasm</location>
    </subcellularLocation>
</comment>
<comment type="alternative products">
    <event type="alternative splicing"/>
    <isoform>
        <id>P18510-1</id>
        <name>1</name>
        <sequence type="displayed"/>
    </isoform>
    <isoform>
        <id>P18510-2</id>
        <name>2</name>
        <name>icIL-1ra</name>
        <sequence type="described" ref="VSP_002649"/>
    </isoform>
    <isoform>
        <id>P18510-3</id>
        <name>3</name>
        <name>icIL-1ra type II</name>
        <sequence type="described" ref="VSP_002650"/>
    </isoform>
    <isoform>
        <id>P18510-4</id>
        <name>4</name>
        <sequence type="described" ref="VSP_002651"/>
    </isoform>
</comment>
<comment type="tissue specificity">
    <text>The intracellular form of IL1RN is predominantly expressed in epithelial cells.</text>
</comment>
<comment type="disease" evidence="9">
    <disease id="DI-02757">
        <name>Microvascular complications of diabetes 4</name>
        <acronym>MVCD4</acronym>
        <description>Pathological conditions that develop in numerous tissues and organs as a consequence of diabetes mellitus. They include diabetic retinopathy, diabetic nephropathy leading to end-stage renal disease, and diabetic neuropathy. Diabetic retinopathy remains the major cause of new-onset blindness among diabetic adults. It is characterized by vascular permeability and increased tissue ischemia and angiogenesis.</description>
        <dbReference type="MIM" id="612628"/>
    </disease>
    <text>Disease susceptibility is associated with variants affecting the gene represented in this entry.</text>
</comment>
<comment type="disease" evidence="4">
    <disease id="DI-02552">
        <name>Chronic recurrent multifocal osteomyelitis 2, with periostitis and pustulosis</name>
        <acronym>CRMO2</acronym>
        <description>An autosomal recessive, autoinflammatory disease of skin and bone resulting in sterile multifocal osteomyelitis, periostitis, and pustulosis from birth. The term autoinflammatory disease describes a group of disorders characterized by attacks of seemingly unprovoked inflammation without significant levels of autoantibodies and autoreactive T-cells.</description>
        <dbReference type="MIM" id="612852"/>
    </disease>
    <text>The disease is caused by variants affecting the gene represented in this entry.</text>
</comment>
<comment type="pharmaceutical">
    <text>Available under the name Kineret (Amgen). Used for the reduction in signs and symptoms and slowing the progression of structural damage in moderately to severely active rheumatoid arthritis.</text>
</comment>
<comment type="similarity">
    <text evidence="15">Belongs to the IL-1 family.</text>
</comment>
<comment type="online information" name="Wikipedia">
    <link uri="https://en.wikipedia.org/wiki/Interleukin_1"/>
    <text>Interleukin-1 entry</text>
</comment>
<comment type="online information" name="Kineret professional medical information">
    <link uri="https://www.rxlist.com/kineret-drug.htm"/>
</comment>
<feature type="signal peptide" evidence="5 6">
    <location>
        <begin position="1"/>
        <end position="25"/>
    </location>
</feature>
<feature type="chain" id="PRO_0000015328" description="Interleukin-1 receptor antagonist protein">
    <location>
        <begin position="26"/>
        <end position="177"/>
    </location>
</feature>
<feature type="glycosylation site" description="N-linked (GlcNAc...) asparagine" evidence="2 5">
    <location>
        <position position="109"/>
    </location>
</feature>
<feature type="disulfide bond">
    <location>
        <begin position="91"/>
        <end position="141"/>
    </location>
</feature>
<feature type="splice variant" id="VSP_002651" description="In isoform 4." evidence="14">
    <location>
        <begin position="1"/>
        <end position="34"/>
    </location>
</feature>
<feature type="splice variant" id="VSP_002649" description="In isoform 2." evidence="11 12">
    <original>MEICRGLRSHLITLLLFLFHS</original>
    <variation>MAL</variation>
    <location>
        <begin position="1"/>
        <end position="21"/>
    </location>
</feature>
<feature type="splice variant" id="VSP_002650" description="In isoform 3." evidence="10 13">
    <original>MEICRGLRSHLITLLLFLFHS</original>
    <variation>MALADLYEEGGGGGGEGEDNADSK</variation>
    <location>
        <begin position="1"/>
        <end position="21"/>
    </location>
</feature>
<feature type="sequence variant" id="VAR_049573" description="In dbSNP:rs45507693." evidence="3">
    <original>A</original>
    <variation>T</variation>
    <location>
        <position position="124"/>
    </location>
</feature>
<feature type="strand" evidence="16">
    <location>
        <begin position="36"/>
        <end position="42"/>
    </location>
</feature>
<feature type="turn" evidence="17">
    <location>
        <begin position="43"/>
        <end position="45"/>
    </location>
</feature>
<feature type="strand" evidence="16">
    <location>
        <begin position="47"/>
        <end position="51"/>
    </location>
</feature>
<feature type="strand" evidence="16">
    <location>
        <begin position="54"/>
        <end position="58"/>
    </location>
</feature>
<feature type="helix" evidence="16">
    <location>
        <begin position="62"/>
        <end position="67"/>
    </location>
</feature>
<feature type="strand" evidence="16">
    <location>
        <begin position="71"/>
        <end position="76"/>
    </location>
</feature>
<feature type="turn" evidence="16">
    <location>
        <begin position="77"/>
        <end position="79"/>
    </location>
</feature>
<feature type="strand" evidence="16">
    <location>
        <begin position="80"/>
        <end position="85"/>
    </location>
</feature>
<feature type="turn" evidence="16">
    <location>
        <begin position="86"/>
        <end position="89"/>
    </location>
</feature>
<feature type="strand" evidence="16">
    <location>
        <begin position="90"/>
        <end position="97"/>
    </location>
</feature>
<feature type="strand" evidence="16">
    <location>
        <begin position="100"/>
        <end position="106"/>
    </location>
</feature>
<feature type="helix" evidence="16">
    <location>
        <begin position="110"/>
        <end position="112"/>
    </location>
</feature>
<feature type="helix" evidence="16">
    <location>
        <begin position="118"/>
        <end position="123"/>
    </location>
</feature>
<feature type="strand" evidence="16">
    <location>
        <begin position="124"/>
        <end position="130"/>
    </location>
</feature>
<feature type="strand" evidence="16">
    <location>
        <begin position="133"/>
        <end position="141"/>
    </location>
</feature>
<feature type="strand" evidence="16">
    <location>
        <begin position="145"/>
        <end position="151"/>
    </location>
</feature>
<feature type="strand" evidence="16">
    <location>
        <begin position="157"/>
        <end position="160"/>
    </location>
</feature>
<feature type="strand" evidence="16">
    <location>
        <begin position="162"/>
        <end position="168"/>
    </location>
</feature>
<feature type="strand" evidence="16">
    <location>
        <begin position="171"/>
        <end position="175"/>
    </location>
</feature>
<reference key="1">
    <citation type="journal article" date="1990" name="Nature">
        <title>Purification, cloning, expression and biological characterization of an interleukin-1 receptor antagonist protein.</title>
        <authorList>
            <person name="Carter D.B."/>
            <person name="Deibel M.R. Jr."/>
            <person name="Dunn C.J."/>
            <person name="Tomich C.S.C."/>
            <person name="Laborde A.L."/>
            <person name="Slightom J.L."/>
            <person name="Berger A.E."/>
            <person name="Bienkowski M.J."/>
            <person name="Sun F.F."/>
            <person name="McEwan R.N."/>
            <person name="Harris P.K.W."/>
            <person name="Yem A.W."/>
            <person name="Waszak G.A."/>
            <person name="Chosay J.G."/>
            <person name="Sieu L.C."/>
            <person name="Hardee M.M."/>
            <person name="Zurcher-Neely H.A."/>
            <person name="Reardon I.M."/>
            <person name="Heinrikson R.L."/>
            <person name="Truesdell S.E."/>
            <person name="Shelly J.A."/>
            <person name="Eessalu T.E."/>
            <person name="Taylor B.M."/>
            <person name="Tracey D.E."/>
        </authorList>
    </citation>
    <scope>NUCLEOTIDE SEQUENCE [MRNA] (ISOFORM 1)</scope>
</reference>
<reference key="2">
    <citation type="journal article" date="1990" name="Nature">
        <title>Primary structure and functional expression from complementary DNA of a human interleukin-1 receptor antagonist.</title>
        <authorList>
            <person name="Eisenberg S.P."/>
            <person name="Evans R.J."/>
            <person name="Arend W.P."/>
            <person name="Verderber E."/>
            <person name="Brewer M.T."/>
            <person name="Hannum C.H."/>
            <person name="Thompson R.C."/>
        </authorList>
    </citation>
    <scope>NUCLEOTIDE SEQUENCE [MRNA] (ISOFORM 1)</scope>
</reference>
<reference key="3">
    <citation type="journal article" date="1991" name="Proc. Natl. Acad. Sci. U.S.A.">
        <title>Interleukin 1 receptor antagonist is a member of the interleukin 1 gene family: evolution of a cytokine control mechanism.</title>
        <authorList>
            <person name="Eisenberg S.P."/>
            <person name="Brewer M.T."/>
            <person name="Verderber E."/>
            <person name="Heimdal P."/>
            <person name="Brandhuber B.J."/>
            <person name="Thompson R.C."/>
        </authorList>
    </citation>
    <scope>NUCLEOTIDE SEQUENCE [GENOMIC DNA] (ISOFORM 1)</scope>
</reference>
<reference key="4">
    <citation type="journal article" date="1992" name="Cytokine">
        <title>Cloning and chromosome mapping of the human interleukin-1 receptor antagonist gene.</title>
        <authorList>
            <person name="Lennard A."/>
            <person name="Gorman P."/>
            <person name="Carrier M."/>
            <person name="Griffiths S."/>
            <person name="Scotney H."/>
            <person name="Sheer D."/>
            <person name="Solari R."/>
        </authorList>
    </citation>
    <scope>NUCLEOTIDE SEQUENCE [GENOMIC DNA] (ISOFORM 1)</scope>
</reference>
<reference key="5">
    <citation type="journal article" date="1997" name="J. Immunol.">
        <title>Intracellular IL-1 receptor antagonist promoter: cell type-specific and inducible regulatory regions.</title>
        <authorList>
            <person name="Jenkins J.K."/>
            <person name="Drong R.F."/>
            <person name="Shuck M.E."/>
            <person name="Bienkowski M.J."/>
            <person name="Slightom J.L."/>
            <person name="Arend W.P."/>
            <person name="Smith M.F. Jr."/>
        </authorList>
    </citation>
    <scope>NUCLEOTIDE SEQUENCE [GENOMIC DNA] (ISOFORMS 1 AND 3)</scope>
</reference>
<reference key="6">
    <citation type="journal article" date="1991" name="Proc. Natl. Acad. Sci. U.S.A.">
        <title>cDNA cloning of an intracellular form of the human interleukin 1 receptor antagonist associated with epithelium.</title>
        <authorList>
            <person name="Haskill S."/>
            <person name="Martin G."/>
            <person name="van Le L."/>
            <person name="Morris J."/>
            <person name="Peace A."/>
            <person name="Bigler C.F."/>
            <person name="Jaffe G.J."/>
            <person name="Hammerberg C."/>
            <person name="Sporn S.A."/>
            <person name="Fong S."/>
            <person name="Arend W.P."/>
            <person name="Ralph P."/>
        </authorList>
    </citation>
    <scope>NUCLEOTIDE SEQUENCE [MRNA] (ISOFORM 2)</scope>
</reference>
<reference key="7">
    <citation type="journal article" date="1995" name="J. Exp. Med.">
        <title>Cloning and characterization of a new isoform of the interleukin 1 receptor antagonist.</title>
        <authorList>
            <person name="Muzio M."/>
            <person name="Polentarutti N."/>
            <person name="Sironi M."/>
            <person name="Poli G."/>
            <person name="De Gioia L."/>
            <person name="Introna M."/>
            <person name="Mantovani A."/>
            <person name="Colotta F."/>
        </authorList>
    </citation>
    <scope>NUCLEOTIDE SEQUENCE [MRNA] (ISOFORM 3)</scope>
</reference>
<reference key="8">
    <citation type="submission" date="2002-12" db="EMBL/GenBank/DDBJ databases">
        <authorList>
            <consortium name="SeattleSNPs variation discovery resource"/>
        </authorList>
    </citation>
    <scope>NUCLEOTIDE SEQUENCE [GENOMIC DNA]</scope>
</reference>
<reference key="9">
    <citation type="journal article" date="2004" name="Nat. Genet.">
        <title>Complete sequencing and characterization of 21,243 full-length human cDNAs.</title>
        <authorList>
            <person name="Ota T."/>
            <person name="Suzuki Y."/>
            <person name="Nishikawa T."/>
            <person name="Otsuki T."/>
            <person name="Sugiyama T."/>
            <person name="Irie R."/>
            <person name="Wakamatsu A."/>
            <person name="Hayashi K."/>
            <person name="Sato H."/>
            <person name="Nagai K."/>
            <person name="Kimura K."/>
            <person name="Makita H."/>
            <person name="Sekine M."/>
            <person name="Obayashi M."/>
            <person name="Nishi T."/>
            <person name="Shibahara T."/>
            <person name="Tanaka T."/>
            <person name="Ishii S."/>
            <person name="Yamamoto J."/>
            <person name="Saito K."/>
            <person name="Kawai Y."/>
            <person name="Isono Y."/>
            <person name="Nakamura Y."/>
            <person name="Nagahari K."/>
            <person name="Murakami K."/>
            <person name="Yasuda T."/>
            <person name="Iwayanagi T."/>
            <person name="Wagatsuma M."/>
            <person name="Shiratori A."/>
            <person name="Sudo H."/>
            <person name="Hosoiri T."/>
            <person name="Kaku Y."/>
            <person name="Kodaira H."/>
            <person name="Kondo H."/>
            <person name="Sugawara M."/>
            <person name="Takahashi M."/>
            <person name="Kanda K."/>
            <person name="Yokoi T."/>
            <person name="Furuya T."/>
            <person name="Kikkawa E."/>
            <person name="Omura Y."/>
            <person name="Abe K."/>
            <person name="Kamihara K."/>
            <person name="Katsuta N."/>
            <person name="Sato K."/>
            <person name="Tanikawa M."/>
            <person name="Yamazaki M."/>
            <person name="Ninomiya K."/>
            <person name="Ishibashi T."/>
            <person name="Yamashita H."/>
            <person name="Murakawa K."/>
            <person name="Fujimori K."/>
            <person name="Tanai H."/>
            <person name="Kimata M."/>
            <person name="Watanabe M."/>
            <person name="Hiraoka S."/>
            <person name="Chiba Y."/>
            <person name="Ishida S."/>
            <person name="Ono Y."/>
            <person name="Takiguchi S."/>
            <person name="Watanabe S."/>
            <person name="Yosida M."/>
            <person name="Hotuta T."/>
            <person name="Kusano J."/>
            <person name="Kanehori K."/>
            <person name="Takahashi-Fujii A."/>
            <person name="Hara H."/>
            <person name="Tanase T.-O."/>
            <person name="Nomura Y."/>
            <person name="Togiya S."/>
            <person name="Komai F."/>
            <person name="Hara R."/>
            <person name="Takeuchi K."/>
            <person name="Arita M."/>
            <person name="Imose N."/>
            <person name="Musashino K."/>
            <person name="Yuuki H."/>
            <person name="Oshima A."/>
            <person name="Sasaki N."/>
            <person name="Aotsuka S."/>
            <person name="Yoshikawa Y."/>
            <person name="Matsunawa H."/>
            <person name="Ichihara T."/>
            <person name="Shiohata N."/>
            <person name="Sano S."/>
            <person name="Moriya S."/>
            <person name="Momiyama H."/>
            <person name="Satoh N."/>
            <person name="Takami S."/>
            <person name="Terashima Y."/>
            <person name="Suzuki O."/>
            <person name="Nakagawa S."/>
            <person name="Senoh A."/>
            <person name="Mizoguchi H."/>
            <person name="Goto Y."/>
            <person name="Shimizu F."/>
            <person name="Wakebe H."/>
            <person name="Hishigaki H."/>
            <person name="Watanabe T."/>
            <person name="Sugiyama A."/>
            <person name="Takemoto M."/>
            <person name="Kawakami B."/>
            <person name="Yamazaki M."/>
            <person name="Watanabe K."/>
            <person name="Kumagai A."/>
            <person name="Itakura S."/>
            <person name="Fukuzumi Y."/>
            <person name="Fujimori Y."/>
            <person name="Komiyama M."/>
            <person name="Tashiro H."/>
            <person name="Tanigami A."/>
            <person name="Fujiwara T."/>
            <person name="Ono T."/>
            <person name="Yamada K."/>
            <person name="Fujii Y."/>
            <person name="Ozaki K."/>
            <person name="Hirao M."/>
            <person name="Ohmori Y."/>
            <person name="Kawabata A."/>
            <person name="Hikiji T."/>
            <person name="Kobatake N."/>
            <person name="Inagaki H."/>
            <person name="Ikema Y."/>
            <person name="Okamoto S."/>
            <person name="Okitani R."/>
            <person name="Kawakami T."/>
            <person name="Noguchi S."/>
            <person name="Itoh T."/>
            <person name="Shigeta K."/>
            <person name="Senba T."/>
            <person name="Matsumura K."/>
            <person name="Nakajima Y."/>
            <person name="Mizuno T."/>
            <person name="Morinaga M."/>
            <person name="Sasaki M."/>
            <person name="Togashi T."/>
            <person name="Oyama M."/>
            <person name="Hata H."/>
            <person name="Watanabe M."/>
            <person name="Komatsu T."/>
            <person name="Mizushima-Sugano J."/>
            <person name="Satoh T."/>
            <person name="Shirai Y."/>
            <person name="Takahashi Y."/>
            <person name="Nakagawa K."/>
            <person name="Okumura K."/>
            <person name="Nagase T."/>
            <person name="Nomura N."/>
            <person name="Kikuchi H."/>
            <person name="Masuho Y."/>
            <person name="Yamashita R."/>
            <person name="Nakai K."/>
            <person name="Yada T."/>
            <person name="Nakamura Y."/>
            <person name="Ohara O."/>
            <person name="Isogai T."/>
            <person name="Sugano S."/>
        </authorList>
    </citation>
    <scope>NUCLEOTIDE SEQUENCE [LARGE SCALE MRNA] (ISOFORMS 1 AND 3)</scope>
    <source>
        <tissue>Esophagus</tissue>
    </source>
</reference>
<reference key="10">
    <citation type="journal article" date="2005" name="Nature">
        <title>Generation and annotation of the DNA sequences of human chromosomes 2 and 4.</title>
        <authorList>
            <person name="Hillier L.W."/>
            <person name="Graves T.A."/>
            <person name="Fulton R.S."/>
            <person name="Fulton L.A."/>
            <person name="Pepin K.H."/>
            <person name="Minx P."/>
            <person name="Wagner-McPherson C."/>
            <person name="Layman D."/>
            <person name="Wylie K."/>
            <person name="Sekhon M."/>
            <person name="Becker M.C."/>
            <person name="Fewell G.A."/>
            <person name="Delehaunty K.D."/>
            <person name="Miner T.L."/>
            <person name="Nash W.E."/>
            <person name="Kremitzki C."/>
            <person name="Oddy L."/>
            <person name="Du H."/>
            <person name="Sun H."/>
            <person name="Bradshaw-Cordum H."/>
            <person name="Ali J."/>
            <person name="Carter J."/>
            <person name="Cordes M."/>
            <person name="Harris A."/>
            <person name="Isak A."/>
            <person name="van Brunt A."/>
            <person name="Nguyen C."/>
            <person name="Du F."/>
            <person name="Courtney L."/>
            <person name="Kalicki J."/>
            <person name="Ozersky P."/>
            <person name="Abbott S."/>
            <person name="Armstrong J."/>
            <person name="Belter E.A."/>
            <person name="Caruso L."/>
            <person name="Cedroni M."/>
            <person name="Cotton M."/>
            <person name="Davidson T."/>
            <person name="Desai A."/>
            <person name="Elliott G."/>
            <person name="Erb T."/>
            <person name="Fronick C."/>
            <person name="Gaige T."/>
            <person name="Haakenson W."/>
            <person name="Haglund K."/>
            <person name="Holmes A."/>
            <person name="Harkins R."/>
            <person name="Kim K."/>
            <person name="Kruchowski S.S."/>
            <person name="Strong C.M."/>
            <person name="Grewal N."/>
            <person name="Goyea E."/>
            <person name="Hou S."/>
            <person name="Levy A."/>
            <person name="Martinka S."/>
            <person name="Mead K."/>
            <person name="McLellan M.D."/>
            <person name="Meyer R."/>
            <person name="Randall-Maher J."/>
            <person name="Tomlinson C."/>
            <person name="Dauphin-Kohlberg S."/>
            <person name="Kozlowicz-Reilly A."/>
            <person name="Shah N."/>
            <person name="Swearengen-Shahid S."/>
            <person name="Snider J."/>
            <person name="Strong J.T."/>
            <person name="Thompson J."/>
            <person name="Yoakum M."/>
            <person name="Leonard S."/>
            <person name="Pearman C."/>
            <person name="Trani L."/>
            <person name="Radionenko M."/>
            <person name="Waligorski J.E."/>
            <person name="Wang C."/>
            <person name="Rock S.M."/>
            <person name="Tin-Wollam A.-M."/>
            <person name="Maupin R."/>
            <person name="Latreille P."/>
            <person name="Wendl M.C."/>
            <person name="Yang S.-P."/>
            <person name="Pohl C."/>
            <person name="Wallis J.W."/>
            <person name="Spieth J."/>
            <person name="Bieri T.A."/>
            <person name="Berkowicz N."/>
            <person name="Nelson J.O."/>
            <person name="Osborne J."/>
            <person name="Ding L."/>
            <person name="Meyer R."/>
            <person name="Sabo A."/>
            <person name="Shotland Y."/>
            <person name="Sinha P."/>
            <person name="Wohldmann P.E."/>
            <person name="Cook L.L."/>
            <person name="Hickenbotham M.T."/>
            <person name="Eldred J."/>
            <person name="Williams D."/>
            <person name="Jones T.A."/>
            <person name="She X."/>
            <person name="Ciccarelli F.D."/>
            <person name="Izaurralde E."/>
            <person name="Taylor J."/>
            <person name="Schmutz J."/>
            <person name="Myers R.M."/>
            <person name="Cox D.R."/>
            <person name="Huang X."/>
            <person name="McPherson J.D."/>
            <person name="Mardis E.R."/>
            <person name="Clifton S.W."/>
            <person name="Warren W.C."/>
            <person name="Chinwalla A.T."/>
            <person name="Eddy S.R."/>
            <person name="Marra M.A."/>
            <person name="Ovcharenko I."/>
            <person name="Furey T.S."/>
            <person name="Miller W."/>
            <person name="Eichler E.E."/>
            <person name="Bork P."/>
            <person name="Suyama M."/>
            <person name="Torrents D."/>
            <person name="Waterston R.H."/>
            <person name="Wilson R.K."/>
        </authorList>
    </citation>
    <scope>NUCLEOTIDE SEQUENCE [LARGE SCALE GENOMIC DNA]</scope>
</reference>
<reference key="11">
    <citation type="submission" date="2005-07" db="EMBL/GenBank/DDBJ databases">
        <authorList>
            <person name="Mural R.J."/>
            <person name="Istrail S."/>
            <person name="Sutton G.G."/>
            <person name="Florea L."/>
            <person name="Halpern A.L."/>
            <person name="Mobarry C.M."/>
            <person name="Lippert R."/>
            <person name="Walenz B."/>
            <person name="Shatkay H."/>
            <person name="Dew I."/>
            <person name="Miller J.R."/>
            <person name="Flanigan M.J."/>
            <person name="Edwards N.J."/>
            <person name="Bolanos R."/>
            <person name="Fasulo D."/>
            <person name="Halldorsson B.V."/>
            <person name="Hannenhalli S."/>
            <person name="Turner R."/>
            <person name="Yooseph S."/>
            <person name="Lu F."/>
            <person name="Nusskern D.R."/>
            <person name="Shue B.C."/>
            <person name="Zheng X.H."/>
            <person name="Zhong F."/>
            <person name="Delcher A.L."/>
            <person name="Huson D.H."/>
            <person name="Kravitz S.A."/>
            <person name="Mouchard L."/>
            <person name="Reinert K."/>
            <person name="Remington K.A."/>
            <person name="Clark A.G."/>
            <person name="Waterman M.S."/>
            <person name="Eichler E.E."/>
            <person name="Adams M.D."/>
            <person name="Hunkapiller M.W."/>
            <person name="Myers E.W."/>
            <person name="Venter J.C."/>
        </authorList>
    </citation>
    <scope>NUCLEOTIDE SEQUENCE [LARGE SCALE GENOMIC DNA]</scope>
</reference>
<reference key="12">
    <citation type="journal article" date="2004" name="Genome Res.">
        <title>The status, quality, and expansion of the NIH full-length cDNA project: the Mammalian Gene Collection (MGC).</title>
        <authorList>
            <consortium name="The MGC Project Team"/>
        </authorList>
    </citation>
    <scope>NUCLEOTIDE SEQUENCE [LARGE SCALE MRNA] (ISOFORM 2)</scope>
    <source>
        <tissue>Pancreas</tissue>
    </source>
</reference>
<reference key="13">
    <citation type="journal article" date="1990" name="Nature">
        <title>Interleukin-1 receptor antagonist activity of a human interleukin-1 inhibitor.</title>
        <authorList>
            <person name="Hannum C.H."/>
            <person name="Wilcox C.J."/>
            <person name="Arend W.P."/>
            <person name="Joslin F.G."/>
            <person name="Dripps D.J."/>
            <person name="Heimdal P.L."/>
            <person name="Armes L.G."/>
            <person name="Sommer A."/>
            <person name="Eisenberg S.P."/>
            <person name="Thompson R.C."/>
        </authorList>
    </citation>
    <scope>PROTEIN SEQUENCE OF 26-45</scope>
    <scope>GLYCOSYLATION AT ASN-109</scope>
</reference>
<reference key="14">
    <citation type="journal article" date="1990" name="J. Biol. Chem.">
        <title>Purification and characterization of interleukin 1 receptor level antagonist proteins from THP-1 cells.</title>
        <authorList>
            <person name="Bienkowski M.J."/>
            <person name="Eessalu T.E."/>
            <person name="Berger A.E."/>
            <person name="Truesdell S.E."/>
            <person name="Shelly J.A."/>
            <person name="Laborde A.L."/>
            <person name="Zurcher-Neely H.A."/>
            <person name="Reardon I.M."/>
            <person name="Heinrikson R.L."/>
            <person name="Chosay J.G."/>
            <person name="Tracey D.E."/>
        </authorList>
    </citation>
    <scope>PROTEIN SEQUENCE OF 26-52</scope>
</reference>
<reference key="15">
    <citation type="journal article" date="1998" name="Biochem. Biophys. Res. Commun.">
        <title>Detection of an interleukin-1 intracellular receptor antagonist mRNA variant.</title>
        <authorList>
            <person name="Weissbach L."/>
            <person name="Tran K."/>
            <person name="Colquhoun S.A."/>
            <person name="Champliaud M.-F."/>
            <person name="Towle C.A."/>
        </authorList>
    </citation>
    <scope>NUCLEOTIDE SEQUENCE [MRNA] OF 35-177 (ISOFORM 4)</scope>
</reference>
<reference key="16">
    <citation type="journal article" date="1994" name="J. Immunol.">
        <title>Elevated levels of shed type II IL-1 receptor in sepsis. Potential role for type II receptor in regulation of IL-1 responses.</title>
        <authorList>
            <person name="Giri J.G."/>
            <person name="Wells J."/>
            <person name="Dower S.K."/>
            <person name="McCall C.E."/>
            <person name="Guzman R.N."/>
            <person name="Slack J."/>
            <person name="Bird T.A."/>
            <person name="Shanebeck K."/>
            <person name="Grabstein K.H."/>
            <person name="Sims J.E."/>
            <person name="Alderson M.R."/>
        </authorList>
    </citation>
    <scope>RECEPTOR-BINDING</scope>
</reference>
<reference key="17">
    <citation type="journal article" date="1995" name="J. Biol. Chem.">
        <title>Molecular cloning and characterization of a second subunit of the interleukin 1 receptor complex.</title>
        <authorList>
            <person name="Greenfeder S.A."/>
            <person name="Nunes P."/>
            <person name="Kwee L."/>
            <person name="Labow M."/>
            <person name="Chizzonite R.A."/>
            <person name="Ju G."/>
        </authorList>
    </citation>
    <scope>FUNCTION</scope>
</reference>
<reference key="18">
    <citation type="journal article" date="2002" name="Genomics">
        <title>A sequence-based map of the nine genes of the human interleukin-1 cluster.</title>
        <authorList>
            <person name="Nicklin M.J.H."/>
            <person name="Barton J.L."/>
            <person name="Nguyen M."/>
            <person name="Fitzgerald M.G."/>
            <person name="Duff W.G."/>
            <person name="Kornman K."/>
        </authorList>
    </citation>
    <scope>IDENTIFICATION (ISOFORM 2)</scope>
</reference>
<reference key="19">
    <citation type="journal article" date="1996" name="Hum. Genet.">
        <title>Interleukin-1 receptor antagonist allele (IL1RN*2) associated with nephropathy in diabetes mellitus.</title>
        <authorList>
            <person name="Blakemore A.I.F."/>
            <person name="Cox A."/>
            <person name="Gonzalez A.-M."/>
            <person name="Maskil J.K."/>
            <person name="Hughes M.E."/>
            <person name="Wilson R.M."/>
            <person name="Ward J.D."/>
            <person name="Duff G.W."/>
        </authorList>
    </citation>
    <scope>INVOLVEMENT IN MVCD4</scope>
</reference>
<reference key="20">
    <citation type="journal article" date="2005" name="J. Proteome Res.">
        <title>Human plasma N-glycoproteome analysis by immunoaffinity subtraction, hydrazide chemistry, and mass spectrometry.</title>
        <authorList>
            <person name="Liu T."/>
            <person name="Qian W.-J."/>
            <person name="Gritsenko M.A."/>
            <person name="Camp D.G. II"/>
            <person name="Monroe M.E."/>
            <person name="Moore R.J."/>
            <person name="Smith R.D."/>
        </authorList>
    </citation>
    <scope>GLYCOSYLATION [LARGE SCALE ANALYSIS] AT ASN-109</scope>
    <source>
        <tissue>Plasma</tissue>
    </source>
</reference>
<reference key="21">
    <citation type="journal article" date="2009" name="N. Engl. J. Med.">
        <title>An autoinflammatory disease with deficiency of the interleukin-1-receptor antagonist.</title>
        <authorList>
            <person name="Aksentijevich I."/>
            <person name="Masters S.L."/>
            <person name="Ferguson P.J."/>
            <person name="Dancey P."/>
            <person name="Frenkel J."/>
            <person name="van Royen-Kerkhoff A."/>
            <person name="Laxer R."/>
            <person name="Tedgard U."/>
            <person name="Cowen E.W."/>
            <person name="Pham T.H."/>
            <person name="Booty M."/>
            <person name="Estes J.D."/>
            <person name="Sandler N.G."/>
            <person name="Plass N."/>
            <person name="Stone D.L."/>
            <person name="Turner M.L."/>
            <person name="Hill S."/>
            <person name="Butman J.A."/>
            <person name="Schneider R."/>
            <person name="Babyn P."/>
            <person name="El-Shanti H.I."/>
            <person name="Pope E."/>
            <person name="Barron K."/>
            <person name="Bing X."/>
            <person name="Laurence A."/>
            <person name="Lee C.C."/>
            <person name="Chapelle D."/>
            <person name="Clarke G.I."/>
            <person name="Ohson K."/>
            <person name="Nicholson M."/>
            <person name="Gadina M."/>
            <person name="Yang B."/>
            <person name="Korman B.D."/>
            <person name="Gregersen P.K."/>
            <person name="van Hagen P.M."/>
            <person name="Hak A.E."/>
            <person name="Huizing M."/>
            <person name="Rahman P."/>
            <person name="Douek D.C."/>
            <person name="Remmers E.F."/>
            <person name="Kastner D.L."/>
            <person name="Goldbach-Mansky R."/>
        </authorList>
    </citation>
    <scope>INVOLVEMENT IN CRMO2</scope>
</reference>
<reference key="22">
    <citation type="journal article" date="2020" name="BMC Infect. Dis.">
        <title>Serum level of IL-1ra was associated with the treatment of latent tuberculosis infection in a Chinese population.</title>
        <authorList>
            <person name="Zhang H."/>
            <person name="Cao X."/>
            <person name="Xin H."/>
            <person name="Liu J."/>
            <person name="Pan S."/>
            <person name="Guan L."/>
            <person name="Shen F."/>
            <person name="Liu Z."/>
            <person name="Wang D."/>
            <person name="Guan X."/>
            <person name="Yan J."/>
            <person name="Feng B."/>
            <person name="Li N."/>
            <person name="Jin Q."/>
            <person name="Gao L."/>
        </authorList>
    </citation>
    <scope>SUBCELLULAR LOCATION</scope>
</reference>
<reference key="23">
    <citation type="journal article" date="1992" name="Biochemistry">
        <title>Secondary structure and topology of interleukin-1 receptor antagonist protein determined by heteronuclear three-dimensional NMR spectroscopy.</title>
        <authorList>
            <person name="Stockman B.J."/>
            <person name="Scahill T.A."/>
            <person name="Roy M."/>
            <person name="Ulrich E.L."/>
            <person name="Strakalaitis N.A."/>
            <person name="Brunner D.P."/>
            <person name="Yem A.W."/>
            <person name="Deibel M.R. Jr."/>
        </authorList>
    </citation>
    <scope>STRUCTURE BY NMR</scope>
</reference>
<reference key="24">
    <citation type="journal article" date="1994" name="FEBS Lett.">
        <title>Solution structure of human interleukin-1 receptor antagonist protein.</title>
        <authorList>
            <person name="Stockman B.J."/>
            <person name="Scahill T.A."/>
            <person name="Strakalaitis N.A."/>
            <person name="Brunner D.P."/>
            <person name="Yem A.W."/>
            <person name="Deibel M.R. Jr."/>
        </authorList>
    </citation>
    <scope>STRUCTURE BY NMR</scope>
</reference>
<reference key="25">
    <citation type="journal article" date="1994" name="J. Biol. Chem.">
        <title>X-ray structure of interleukin-1 receptor antagonist at 2.0-A resolution.</title>
        <authorList>
            <person name="Vigers G.P.A."/>
            <person name="Caffes P."/>
            <person name="Evans R.J."/>
            <person name="Thompson R.C."/>
            <person name="Eisenberg S.P."/>
            <person name="Brandhuber B.J."/>
        </authorList>
    </citation>
    <scope>X-RAY CRYSTALLOGRAPHY (2.0 ANGSTROMS)</scope>
</reference>
<reference key="26">
    <citation type="journal article" date="1995" name="Eur. J. Biochem.">
        <title>Refined crystal structure of the interleukin-1 receptor antagonist. Presence of a disulfide link and a cis-proline.</title>
        <authorList>
            <person name="Schreuder H.A."/>
            <person name="Rondeau J.-M."/>
            <person name="Tardif C."/>
            <person name="Soffientini A."/>
            <person name="Sarubbi E."/>
            <person name="Akeson A."/>
            <person name="Bowlin T.L."/>
            <person name="Yanofsky S."/>
            <person name="Barrett R.W."/>
        </authorList>
    </citation>
    <scope>X-RAY CRYSTALLOGRAPHY (2.1 ANGSTROMS)</scope>
</reference>
<reference key="27">
    <citation type="journal article" date="1997" name="Nature">
        <title>A new cytokine-receptor binding mode revealed by the crystal structure of the IL-1 receptor with an antagonist.</title>
        <authorList>
            <person name="Schreuder H."/>
            <person name="Tardif C."/>
            <person name="Trump-Kallmeyer S."/>
            <person name="Soffientini A."/>
            <person name="Sarubbi E."/>
            <person name="Akeson A."/>
            <person name="Bowlin T."/>
            <person name="Yanofsky S."/>
            <person name="Barrett R.W."/>
        </authorList>
    </citation>
    <scope>X-RAY CRYSTALLOGRAPHY (2.7 ANGSTROMS) OF 32-177 IN COMPLEX WITH IL1R</scope>
</reference>
<reference key="28">
    <citation type="journal article" date="2008" name="Nature">
        <title>DNA sequencing of a cytogenetically normal acute myeloid leukaemia genome.</title>
        <authorList>
            <person name="Ley T.J."/>
            <person name="Mardis E.R."/>
            <person name="Ding L."/>
            <person name="Fulton B."/>
            <person name="McLellan M.D."/>
            <person name="Chen K."/>
            <person name="Dooling D."/>
            <person name="Dunford-Shore B.H."/>
            <person name="McGrath S."/>
            <person name="Hickenbotham M."/>
            <person name="Cook L."/>
            <person name="Abbott R."/>
            <person name="Larson D.E."/>
            <person name="Koboldt D.C."/>
            <person name="Pohl C."/>
            <person name="Smith S."/>
            <person name="Hawkins A."/>
            <person name="Abbott S."/>
            <person name="Locke D."/>
            <person name="Hillier L.W."/>
            <person name="Miner T."/>
            <person name="Fulton L."/>
            <person name="Magrini V."/>
            <person name="Wylie T."/>
            <person name="Glasscock J."/>
            <person name="Conyers J."/>
            <person name="Sander N."/>
            <person name="Shi X."/>
            <person name="Osborne J.R."/>
            <person name="Minx P."/>
            <person name="Gordon D."/>
            <person name="Chinwalla A."/>
            <person name="Zhao Y."/>
            <person name="Ries R.E."/>
            <person name="Payton J.E."/>
            <person name="Westervelt P."/>
            <person name="Tomasson M.H."/>
            <person name="Watson M."/>
            <person name="Baty J."/>
            <person name="Ivanovich J."/>
            <person name="Heath S."/>
            <person name="Shannon W.D."/>
            <person name="Nagarajan R."/>
            <person name="Walter M.J."/>
            <person name="Link D.C."/>
            <person name="Graubert T.A."/>
            <person name="DiPersio J.F."/>
            <person name="Wilson R.K."/>
        </authorList>
    </citation>
    <scope>VARIANT [LARGE SCALE ANALYSIS] THR-124</scope>
</reference>
<proteinExistence type="evidence at protein level"/>
<name>IL1RA_HUMAN</name>
<evidence type="ECO:0000250" key="1">
    <source>
        <dbReference type="UniProtKB" id="P25085"/>
    </source>
</evidence>
<evidence type="ECO:0000269" key="2">
    <source>
    </source>
</evidence>
<evidence type="ECO:0000269" key="3">
    <source>
    </source>
</evidence>
<evidence type="ECO:0000269" key="4">
    <source>
    </source>
</evidence>
<evidence type="ECO:0000269" key="5">
    <source>
    </source>
</evidence>
<evidence type="ECO:0000269" key="6">
    <source>
    </source>
</evidence>
<evidence type="ECO:0000269" key="7">
    <source>
    </source>
</evidence>
<evidence type="ECO:0000269" key="8">
    <source>
    </source>
</evidence>
<evidence type="ECO:0000269" key="9">
    <source>
    </source>
</evidence>
<evidence type="ECO:0000303" key="10">
    <source>
    </source>
</evidence>
<evidence type="ECO:0000303" key="11">
    <source>
    </source>
</evidence>
<evidence type="ECO:0000303" key="12">
    <source>
    </source>
</evidence>
<evidence type="ECO:0000303" key="13">
    <source>
    </source>
</evidence>
<evidence type="ECO:0000303" key="14">
    <source>
    </source>
</evidence>
<evidence type="ECO:0000305" key="15"/>
<evidence type="ECO:0007829" key="16">
    <source>
        <dbReference type="PDB" id="1ILR"/>
    </source>
</evidence>
<evidence type="ECO:0007829" key="17">
    <source>
        <dbReference type="PDB" id="1IRP"/>
    </source>
</evidence>
<accession>P18510</accession>
<accession>A8K4G1</accession>
<accession>Q14628</accession>
<accession>Q53SC2</accession>
<accession>Q7RTZ4</accession>
<accession>Q96GD6</accession>
<accession>Q9UPC0</accession>
<sequence length="177" mass="20055">MEICRGLRSHLITLLLFLFHSETICRPSGRKSSKMQAFRIWDVNQKTFYLRNNQLVAGYLQGPNVNLEEKIDVVPIEPHALFLGIHGGKMCLSCVKSGDETRLQLEAVNITDLSENRKQDKRFAFIRSDSGPTTSFESAACPGWFLCTAMEADQPVSLTNMPDEGVMVTKFYFQEDE</sequence>
<organism>
    <name type="scientific">Homo sapiens</name>
    <name type="common">Human</name>
    <dbReference type="NCBI Taxonomy" id="9606"/>
    <lineage>
        <taxon>Eukaryota</taxon>
        <taxon>Metazoa</taxon>
        <taxon>Chordata</taxon>
        <taxon>Craniata</taxon>
        <taxon>Vertebrata</taxon>
        <taxon>Euteleostomi</taxon>
        <taxon>Mammalia</taxon>
        <taxon>Eutheria</taxon>
        <taxon>Euarchontoglires</taxon>
        <taxon>Primates</taxon>
        <taxon>Haplorrhini</taxon>
        <taxon>Catarrhini</taxon>
        <taxon>Hominidae</taxon>
        <taxon>Homo</taxon>
    </lineage>
</organism>
<keyword id="KW-0002">3D-structure</keyword>
<keyword id="KW-0025">Alternative splicing</keyword>
<keyword id="KW-0963">Cytoplasm</keyword>
<keyword id="KW-0903">Direct protein sequencing</keyword>
<keyword id="KW-1015">Disulfide bond</keyword>
<keyword id="KW-0325">Glycoprotein</keyword>
<keyword id="KW-0582">Pharmaceutical</keyword>
<keyword id="KW-1267">Proteomics identification</keyword>
<keyword id="KW-1185">Reference proteome</keyword>
<keyword id="KW-0964">Secreted</keyword>
<keyword id="KW-0732">Signal</keyword>